<accession>B3CT31</accession>
<feature type="chain" id="PRO_1000126488" description="Small ribosomal subunit protein bS20">
    <location>
        <begin position="1"/>
        <end position="90"/>
    </location>
</feature>
<feature type="region of interest" description="Disordered" evidence="2">
    <location>
        <begin position="1"/>
        <end position="25"/>
    </location>
</feature>
<feature type="compositionally biased region" description="Polar residues" evidence="2">
    <location>
        <begin position="1"/>
        <end position="10"/>
    </location>
</feature>
<reference key="1">
    <citation type="journal article" date="2008" name="DNA Res.">
        <title>The whole-genome sequencing of the obligate intracellular bacterium Orientia tsutsugamushi revealed massive gene amplification during reductive genome evolution.</title>
        <authorList>
            <person name="Nakayama K."/>
            <person name="Yamashita A."/>
            <person name="Kurokawa K."/>
            <person name="Morimoto T."/>
            <person name="Ogawa M."/>
            <person name="Fukuhara M."/>
            <person name="Urakami H."/>
            <person name="Ohnishi M."/>
            <person name="Uchiyama I."/>
            <person name="Ogura Y."/>
            <person name="Ooka T."/>
            <person name="Oshima K."/>
            <person name="Tamura A."/>
            <person name="Hattori M."/>
            <person name="Hayashi T."/>
        </authorList>
    </citation>
    <scope>NUCLEOTIDE SEQUENCE [LARGE SCALE GENOMIC DNA]</scope>
    <source>
        <strain>Ikeda</strain>
    </source>
</reference>
<proteinExistence type="inferred from homology"/>
<evidence type="ECO:0000255" key="1">
    <source>
        <dbReference type="HAMAP-Rule" id="MF_00500"/>
    </source>
</evidence>
<evidence type="ECO:0000256" key="2">
    <source>
        <dbReference type="SAM" id="MobiDB-lite"/>
    </source>
</evidence>
<evidence type="ECO:0000305" key="3"/>
<name>RS20_ORITI</name>
<organism>
    <name type="scientific">Orientia tsutsugamushi (strain Ikeda)</name>
    <name type="common">Rickettsia tsutsugamushi</name>
    <dbReference type="NCBI Taxonomy" id="334380"/>
    <lineage>
        <taxon>Bacteria</taxon>
        <taxon>Pseudomonadati</taxon>
        <taxon>Pseudomonadota</taxon>
        <taxon>Alphaproteobacteria</taxon>
        <taxon>Rickettsiales</taxon>
        <taxon>Rickettsiaceae</taxon>
        <taxon>Rickettsieae</taxon>
        <taxon>Orientia</taxon>
    </lineage>
</organism>
<dbReference type="EMBL" id="AP008981">
    <property type="protein sequence ID" value="BAG40528.1"/>
    <property type="molecule type" value="Genomic_DNA"/>
</dbReference>
<dbReference type="RefSeq" id="WP_012461630.1">
    <property type="nucleotide sequence ID" value="NC_010793.1"/>
</dbReference>
<dbReference type="SMR" id="B3CT31"/>
<dbReference type="KEGG" id="ott:OTT_1070"/>
<dbReference type="HOGENOM" id="CLU_160655_3_0_5"/>
<dbReference type="OrthoDB" id="9807974at2"/>
<dbReference type="Proteomes" id="UP000001033">
    <property type="component" value="Chromosome"/>
</dbReference>
<dbReference type="GO" id="GO:0015935">
    <property type="term" value="C:small ribosomal subunit"/>
    <property type="evidence" value="ECO:0007669"/>
    <property type="project" value="TreeGrafter"/>
</dbReference>
<dbReference type="GO" id="GO:0070181">
    <property type="term" value="F:small ribosomal subunit rRNA binding"/>
    <property type="evidence" value="ECO:0007669"/>
    <property type="project" value="TreeGrafter"/>
</dbReference>
<dbReference type="GO" id="GO:0003735">
    <property type="term" value="F:structural constituent of ribosome"/>
    <property type="evidence" value="ECO:0007669"/>
    <property type="project" value="InterPro"/>
</dbReference>
<dbReference type="GO" id="GO:0006412">
    <property type="term" value="P:translation"/>
    <property type="evidence" value="ECO:0007669"/>
    <property type="project" value="UniProtKB-UniRule"/>
</dbReference>
<dbReference type="Gene3D" id="1.20.58.110">
    <property type="entry name" value="Ribosomal protein S20"/>
    <property type="match status" value="1"/>
</dbReference>
<dbReference type="HAMAP" id="MF_00500">
    <property type="entry name" value="Ribosomal_bS20"/>
    <property type="match status" value="1"/>
</dbReference>
<dbReference type="InterPro" id="IPR002583">
    <property type="entry name" value="Ribosomal_bS20"/>
</dbReference>
<dbReference type="InterPro" id="IPR036510">
    <property type="entry name" value="Ribosomal_bS20_sf"/>
</dbReference>
<dbReference type="NCBIfam" id="TIGR00029">
    <property type="entry name" value="S20"/>
    <property type="match status" value="1"/>
</dbReference>
<dbReference type="PANTHER" id="PTHR33398">
    <property type="entry name" value="30S RIBOSOMAL PROTEIN S20"/>
    <property type="match status" value="1"/>
</dbReference>
<dbReference type="PANTHER" id="PTHR33398:SF1">
    <property type="entry name" value="SMALL RIBOSOMAL SUBUNIT PROTEIN BS20C"/>
    <property type="match status" value="1"/>
</dbReference>
<dbReference type="Pfam" id="PF01649">
    <property type="entry name" value="Ribosomal_S20p"/>
    <property type="match status" value="1"/>
</dbReference>
<dbReference type="SUPFAM" id="SSF46992">
    <property type="entry name" value="Ribosomal protein S20"/>
    <property type="match status" value="1"/>
</dbReference>
<protein>
    <recommendedName>
        <fullName evidence="1">Small ribosomal subunit protein bS20</fullName>
    </recommendedName>
    <alternativeName>
        <fullName evidence="3">30S ribosomal protein S20</fullName>
    </alternativeName>
</protein>
<sequence length="90" mass="10101">MANHKSTQKSIRQDQKRNLINKSRKSNVKTFLKRVTLAINAGDKKVASEALSAAHSKLAKAANKGIYKLNTVSRKVSRLSRKIKQLEDKI</sequence>
<comment type="function">
    <text evidence="1">Binds directly to 16S ribosomal RNA.</text>
</comment>
<comment type="similarity">
    <text evidence="1">Belongs to the bacterial ribosomal protein bS20 family.</text>
</comment>
<gene>
    <name evidence="1" type="primary">rpsT</name>
    <name type="ordered locus">OTT_1070</name>
</gene>
<keyword id="KW-0687">Ribonucleoprotein</keyword>
<keyword id="KW-0689">Ribosomal protein</keyword>
<keyword id="KW-0694">RNA-binding</keyword>
<keyword id="KW-0699">rRNA-binding</keyword>